<proteinExistence type="inferred from homology"/>
<organism>
    <name type="scientific">Streptococcus pyogenes serotype M3 (strain ATCC BAA-595 / MGAS315)</name>
    <dbReference type="NCBI Taxonomy" id="198466"/>
    <lineage>
        <taxon>Bacteria</taxon>
        <taxon>Bacillati</taxon>
        <taxon>Bacillota</taxon>
        <taxon>Bacilli</taxon>
        <taxon>Lactobacillales</taxon>
        <taxon>Streptococcaceae</taxon>
        <taxon>Streptococcus</taxon>
    </lineage>
</organism>
<evidence type="ECO:0000255" key="1">
    <source>
        <dbReference type="HAMAP-Rule" id="MF_00175"/>
    </source>
</evidence>
<evidence type="ECO:0000255" key="2">
    <source>
        <dbReference type="PROSITE-ProRule" id="PRU01250"/>
    </source>
</evidence>
<reference key="1">
    <citation type="journal article" date="2002" name="Proc. Natl. Acad. Sci. U.S.A.">
        <title>Genome sequence of a serotype M3 strain of group A Streptococcus: phage-encoded toxins, the high-virulence phenotype, and clone emergence.</title>
        <authorList>
            <person name="Beres S.B."/>
            <person name="Sylva G.L."/>
            <person name="Barbian K.D."/>
            <person name="Lei B."/>
            <person name="Hoff J.S."/>
            <person name="Mammarella N.D."/>
            <person name="Liu M.-Y."/>
            <person name="Smoot J.C."/>
            <person name="Porcella S.F."/>
            <person name="Parkins L.D."/>
            <person name="Campbell D.S."/>
            <person name="Smith T.M."/>
            <person name="McCormick J.K."/>
            <person name="Leung D.Y.M."/>
            <person name="Schlievert P.M."/>
            <person name="Musser J.M."/>
        </authorList>
    </citation>
    <scope>NUCLEOTIDE SEQUENCE [LARGE SCALE GENOMIC DNA]</scope>
    <source>
        <strain>ATCC BAA-595 / MGAS315</strain>
    </source>
</reference>
<sequence length="409" mass="44991">MAGSRTNDIKVYCSFCGKSQDDVKKIIAGNNVFICNECVALSQEIIKEELAEEVLADLTEVPKPKELLDVLNQYVVGQDRAKRALSVAVYNHYKRVSFTESRDDDDVDLQKSNILMIGPTGSGKTFLAQTLAKSLNVPFAIADATSLTEAGYVGEDVENILLKLIQAADYNVERAERGIIYVDEIDKIAKKGENVSITRDVSGEGVQQALLKIIEGTVASVPPQGGRKHPNQEMIQIDTKNILFIVGGAFDGIEEIVKQRLGEKVIGFGQNSRKIDDNASYMQEIISEDIQKFGLIPEFIGRLPVVAALEQLNTSDLIQILTEPRNALVKQYQALLSYDGVELAFDKEALEAIANKAIERKTGARGLRSIIEETMLDIMFEIPSQEDVTKVRITKAAVEGKSKPVLETA</sequence>
<feature type="chain" id="PRO_0000160435" description="ATP-dependent Clp protease ATP-binding subunit ClpX">
    <location>
        <begin position="1"/>
        <end position="409"/>
    </location>
</feature>
<feature type="domain" description="ClpX-type ZB" evidence="2">
    <location>
        <begin position="1"/>
        <end position="54"/>
    </location>
</feature>
<feature type="binding site" evidence="2">
    <location>
        <position position="13"/>
    </location>
    <ligand>
        <name>Zn(2+)</name>
        <dbReference type="ChEBI" id="CHEBI:29105"/>
    </ligand>
</feature>
<feature type="binding site" evidence="2">
    <location>
        <position position="16"/>
    </location>
    <ligand>
        <name>Zn(2+)</name>
        <dbReference type="ChEBI" id="CHEBI:29105"/>
    </ligand>
</feature>
<feature type="binding site" evidence="2">
    <location>
        <position position="35"/>
    </location>
    <ligand>
        <name>Zn(2+)</name>
        <dbReference type="ChEBI" id="CHEBI:29105"/>
    </ligand>
</feature>
<feature type="binding site" evidence="2">
    <location>
        <position position="38"/>
    </location>
    <ligand>
        <name>Zn(2+)</name>
        <dbReference type="ChEBI" id="CHEBI:29105"/>
    </ligand>
</feature>
<feature type="binding site" evidence="1">
    <location>
        <begin position="119"/>
        <end position="126"/>
    </location>
    <ligand>
        <name>ATP</name>
        <dbReference type="ChEBI" id="CHEBI:30616"/>
    </ligand>
</feature>
<comment type="function">
    <text evidence="1">ATP-dependent specificity component of the Clp protease. It directs the protease to specific substrates. Can perform chaperone functions in the absence of ClpP.</text>
</comment>
<comment type="subunit">
    <text evidence="1">Component of the ClpX-ClpP complex. Forms a hexameric ring that, in the presence of ATP, binds to fourteen ClpP subunits assembled into a disk-like structure with a central cavity, resembling the structure of eukaryotic proteasomes.</text>
</comment>
<comment type="similarity">
    <text evidence="1">Belongs to the ClpX chaperone family.</text>
</comment>
<name>CLPX_STRP3</name>
<gene>
    <name evidence="1" type="primary">clpX</name>
    <name type="ordered locus">SpyM3_0604</name>
</gene>
<dbReference type="EMBL" id="AE014074">
    <property type="protein sequence ID" value="AAM79211.1"/>
    <property type="molecule type" value="Genomic_DNA"/>
</dbReference>
<dbReference type="RefSeq" id="WP_002984948.1">
    <property type="nucleotide sequence ID" value="NC_004070.1"/>
</dbReference>
<dbReference type="SMR" id="P0DA36"/>
<dbReference type="GeneID" id="69901010"/>
<dbReference type="KEGG" id="spg:SpyM3_0604"/>
<dbReference type="HOGENOM" id="CLU_014218_8_2_9"/>
<dbReference type="Proteomes" id="UP000000564">
    <property type="component" value="Chromosome"/>
</dbReference>
<dbReference type="GO" id="GO:0009376">
    <property type="term" value="C:HslUV protease complex"/>
    <property type="evidence" value="ECO:0007669"/>
    <property type="project" value="TreeGrafter"/>
</dbReference>
<dbReference type="GO" id="GO:0005524">
    <property type="term" value="F:ATP binding"/>
    <property type="evidence" value="ECO:0007669"/>
    <property type="project" value="UniProtKB-UniRule"/>
</dbReference>
<dbReference type="GO" id="GO:0016887">
    <property type="term" value="F:ATP hydrolysis activity"/>
    <property type="evidence" value="ECO:0007669"/>
    <property type="project" value="InterPro"/>
</dbReference>
<dbReference type="GO" id="GO:0140662">
    <property type="term" value="F:ATP-dependent protein folding chaperone"/>
    <property type="evidence" value="ECO:0007669"/>
    <property type="project" value="InterPro"/>
</dbReference>
<dbReference type="GO" id="GO:0046983">
    <property type="term" value="F:protein dimerization activity"/>
    <property type="evidence" value="ECO:0007669"/>
    <property type="project" value="InterPro"/>
</dbReference>
<dbReference type="GO" id="GO:0051082">
    <property type="term" value="F:unfolded protein binding"/>
    <property type="evidence" value="ECO:0007669"/>
    <property type="project" value="UniProtKB-UniRule"/>
</dbReference>
<dbReference type="GO" id="GO:0008270">
    <property type="term" value="F:zinc ion binding"/>
    <property type="evidence" value="ECO:0007669"/>
    <property type="project" value="InterPro"/>
</dbReference>
<dbReference type="GO" id="GO:0051301">
    <property type="term" value="P:cell division"/>
    <property type="evidence" value="ECO:0007669"/>
    <property type="project" value="TreeGrafter"/>
</dbReference>
<dbReference type="GO" id="GO:0051603">
    <property type="term" value="P:proteolysis involved in protein catabolic process"/>
    <property type="evidence" value="ECO:0007669"/>
    <property type="project" value="TreeGrafter"/>
</dbReference>
<dbReference type="CDD" id="cd19497">
    <property type="entry name" value="RecA-like_ClpX"/>
    <property type="match status" value="1"/>
</dbReference>
<dbReference type="FunFam" id="1.10.8.60:FF:000002">
    <property type="entry name" value="ATP-dependent Clp protease ATP-binding subunit ClpX"/>
    <property type="match status" value="1"/>
</dbReference>
<dbReference type="FunFam" id="3.40.50.300:FF:000005">
    <property type="entry name" value="ATP-dependent Clp protease ATP-binding subunit ClpX"/>
    <property type="match status" value="1"/>
</dbReference>
<dbReference type="Gene3D" id="1.10.8.60">
    <property type="match status" value="1"/>
</dbReference>
<dbReference type="Gene3D" id="6.20.220.10">
    <property type="entry name" value="ClpX chaperone, C4-type zinc finger domain"/>
    <property type="match status" value="1"/>
</dbReference>
<dbReference type="Gene3D" id="3.40.50.300">
    <property type="entry name" value="P-loop containing nucleotide triphosphate hydrolases"/>
    <property type="match status" value="1"/>
</dbReference>
<dbReference type="HAMAP" id="MF_00175">
    <property type="entry name" value="ClpX"/>
    <property type="match status" value="1"/>
</dbReference>
<dbReference type="InterPro" id="IPR003593">
    <property type="entry name" value="AAA+_ATPase"/>
</dbReference>
<dbReference type="InterPro" id="IPR050052">
    <property type="entry name" value="ATP-dep_Clp_protease_ClpX"/>
</dbReference>
<dbReference type="InterPro" id="IPR003959">
    <property type="entry name" value="ATPase_AAA_core"/>
</dbReference>
<dbReference type="InterPro" id="IPR019489">
    <property type="entry name" value="Clp_ATPase_C"/>
</dbReference>
<dbReference type="InterPro" id="IPR004487">
    <property type="entry name" value="Clp_protease_ATP-bd_su_ClpX"/>
</dbReference>
<dbReference type="InterPro" id="IPR046425">
    <property type="entry name" value="ClpX_bact"/>
</dbReference>
<dbReference type="InterPro" id="IPR027417">
    <property type="entry name" value="P-loop_NTPase"/>
</dbReference>
<dbReference type="InterPro" id="IPR010603">
    <property type="entry name" value="Znf_CppX_C4"/>
</dbReference>
<dbReference type="InterPro" id="IPR038366">
    <property type="entry name" value="Znf_CppX_C4_sf"/>
</dbReference>
<dbReference type="NCBIfam" id="TIGR00382">
    <property type="entry name" value="clpX"/>
    <property type="match status" value="1"/>
</dbReference>
<dbReference type="NCBIfam" id="NF003745">
    <property type="entry name" value="PRK05342.1"/>
    <property type="match status" value="1"/>
</dbReference>
<dbReference type="PANTHER" id="PTHR48102:SF7">
    <property type="entry name" value="ATP-DEPENDENT CLP PROTEASE ATP-BINDING SUBUNIT CLPX-LIKE, MITOCHONDRIAL"/>
    <property type="match status" value="1"/>
</dbReference>
<dbReference type="PANTHER" id="PTHR48102">
    <property type="entry name" value="ATP-DEPENDENT CLP PROTEASE ATP-BINDING SUBUNIT CLPX-LIKE, MITOCHONDRIAL-RELATED"/>
    <property type="match status" value="1"/>
</dbReference>
<dbReference type="Pfam" id="PF07724">
    <property type="entry name" value="AAA_2"/>
    <property type="match status" value="1"/>
</dbReference>
<dbReference type="Pfam" id="PF10431">
    <property type="entry name" value="ClpB_D2-small"/>
    <property type="match status" value="1"/>
</dbReference>
<dbReference type="Pfam" id="PF06689">
    <property type="entry name" value="zf-C4_ClpX"/>
    <property type="match status" value="1"/>
</dbReference>
<dbReference type="SMART" id="SM00382">
    <property type="entry name" value="AAA"/>
    <property type="match status" value="1"/>
</dbReference>
<dbReference type="SMART" id="SM01086">
    <property type="entry name" value="ClpB_D2-small"/>
    <property type="match status" value="1"/>
</dbReference>
<dbReference type="SMART" id="SM00994">
    <property type="entry name" value="zf-C4_ClpX"/>
    <property type="match status" value="1"/>
</dbReference>
<dbReference type="SUPFAM" id="SSF57716">
    <property type="entry name" value="Glucocorticoid receptor-like (DNA-binding domain)"/>
    <property type="match status" value="1"/>
</dbReference>
<dbReference type="SUPFAM" id="SSF52540">
    <property type="entry name" value="P-loop containing nucleoside triphosphate hydrolases"/>
    <property type="match status" value="1"/>
</dbReference>
<dbReference type="PROSITE" id="PS51902">
    <property type="entry name" value="CLPX_ZB"/>
    <property type="match status" value="1"/>
</dbReference>
<keyword id="KW-0067">ATP-binding</keyword>
<keyword id="KW-0143">Chaperone</keyword>
<keyword id="KW-0479">Metal-binding</keyword>
<keyword id="KW-0547">Nucleotide-binding</keyword>
<keyword id="KW-0862">Zinc</keyword>
<accession>P0DA36</accession>
<accession>P63794</accession>
<accession>Q9A089</accession>
<protein>
    <recommendedName>
        <fullName evidence="1">ATP-dependent Clp protease ATP-binding subunit ClpX</fullName>
    </recommendedName>
</protein>